<keyword id="KW-0963">Cytoplasm</keyword>
<keyword id="KW-0342">GTP-binding</keyword>
<keyword id="KW-0378">Hydrolase</keyword>
<keyword id="KW-0460">Magnesium</keyword>
<keyword id="KW-0479">Metal-binding</keyword>
<keyword id="KW-0547">Nucleotide-binding</keyword>
<keyword id="KW-0630">Potassium</keyword>
<keyword id="KW-0819">tRNA processing</keyword>
<name>MNME_BURCM</name>
<evidence type="ECO:0000255" key="1">
    <source>
        <dbReference type="HAMAP-Rule" id="MF_00379"/>
    </source>
</evidence>
<evidence type="ECO:0000305" key="2"/>
<sequence length="464" mass="49490">MLATDSDPIVAIATAAGRGGIGVVRVSFGRGGEAAALPLIDALCGQRLAPRHASYVPFVDEHGAPLDRGIALYFPAPHSYTGEHVLELQGHGGPIVMQLLLQRCLDAGRGFGLRLAQPGEFTRRAFLNDKLDLAQAEAVADLIEASTEAAARSAGRSLDGAFSRQIHALVEDVITLRMLVEATLDFPEEEIDFLEAADARGKLAKIREQLAHVLGDARQGALLREGLSVVLAGQPNVGKSSLLNALAGAELAIVTPIAGTTRDKVAQTIQVEGIPLHIIDTAGLRETEDEVERIGIARTWSEIERADVVLHLLDSRTGMTADDEVIAARFPGGVPVVRVLNKTDLTGVPACVEHPAAAGDLTEVHLSAKRGDGIDMLRAELLRIAGWQAGAEGVYLARERHLIALRAAQEHLAQAADHAEQRAQSLDLFAEELRLAQEQLNAITGEFTSDDLLGVIFSRFCIGK</sequence>
<gene>
    <name evidence="1" type="primary">mnmE</name>
    <name evidence="1" type="synonym">trmE</name>
    <name type="ordered locus">Bamb_3213</name>
</gene>
<reference key="1">
    <citation type="submission" date="2006-08" db="EMBL/GenBank/DDBJ databases">
        <title>Complete sequence of chromosome 1 of Burkholderia cepacia AMMD.</title>
        <authorList>
            <person name="Copeland A."/>
            <person name="Lucas S."/>
            <person name="Lapidus A."/>
            <person name="Barry K."/>
            <person name="Detter J.C."/>
            <person name="Glavina del Rio T."/>
            <person name="Hammon N."/>
            <person name="Israni S."/>
            <person name="Pitluck S."/>
            <person name="Bruce D."/>
            <person name="Chain P."/>
            <person name="Malfatti S."/>
            <person name="Shin M."/>
            <person name="Vergez L."/>
            <person name="Schmutz J."/>
            <person name="Larimer F."/>
            <person name="Land M."/>
            <person name="Hauser L."/>
            <person name="Kyrpides N."/>
            <person name="Kim E."/>
            <person name="Parke J."/>
            <person name="Coenye T."/>
            <person name="Konstantinidis K."/>
            <person name="Ramette A."/>
            <person name="Tiedje J."/>
            <person name="Richardson P."/>
        </authorList>
    </citation>
    <scope>NUCLEOTIDE SEQUENCE [LARGE SCALE GENOMIC DNA]</scope>
    <source>
        <strain>ATCC BAA-244 / DSM 16087 / CCUG 44356 / LMG 19182 / AMMD</strain>
    </source>
</reference>
<dbReference type="EC" id="3.6.-.-" evidence="1"/>
<dbReference type="EMBL" id="CP000440">
    <property type="protein sequence ID" value="ABI88769.1"/>
    <property type="status" value="ALT_INIT"/>
    <property type="molecule type" value="Genomic_DNA"/>
</dbReference>
<dbReference type="RefSeq" id="WP_041491300.1">
    <property type="nucleotide sequence ID" value="NC_008390.1"/>
</dbReference>
<dbReference type="SMR" id="Q0BAQ4"/>
<dbReference type="GeneID" id="93084595"/>
<dbReference type="KEGG" id="bam:Bamb_3213"/>
<dbReference type="PATRIC" id="fig|339670.21.peg.1644"/>
<dbReference type="eggNOG" id="COG0486">
    <property type="taxonomic scope" value="Bacteria"/>
</dbReference>
<dbReference type="Proteomes" id="UP000000662">
    <property type="component" value="Chromosome 1"/>
</dbReference>
<dbReference type="GO" id="GO:0005829">
    <property type="term" value="C:cytosol"/>
    <property type="evidence" value="ECO:0007669"/>
    <property type="project" value="TreeGrafter"/>
</dbReference>
<dbReference type="GO" id="GO:0005525">
    <property type="term" value="F:GTP binding"/>
    <property type="evidence" value="ECO:0007669"/>
    <property type="project" value="UniProtKB-UniRule"/>
</dbReference>
<dbReference type="GO" id="GO:0003924">
    <property type="term" value="F:GTPase activity"/>
    <property type="evidence" value="ECO:0007669"/>
    <property type="project" value="UniProtKB-UniRule"/>
</dbReference>
<dbReference type="GO" id="GO:0046872">
    <property type="term" value="F:metal ion binding"/>
    <property type="evidence" value="ECO:0007669"/>
    <property type="project" value="UniProtKB-KW"/>
</dbReference>
<dbReference type="GO" id="GO:0030488">
    <property type="term" value="P:tRNA methylation"/>
    <property type="evidence" value="ECO:0007669"/>
    <property type="project" value="TreeGrafter"/>
</dbReference>
<dbReference type="GO" id="GO:0002098">
    <property type="term" value="P:tRNA wobble uridine modification"/>
    <property type="evidence" value="ECO:0007669"/>
    <property type="project" value="TreeGrafter"/>
</dbReference>
<dbReference type="CDD" id="cd04164">
    <property type="entry name" value="trmE"/>
    <property type="match status" value="1"/>
</dbReference>
<dbReference type="CDD" id="cd14858">
    <property type="entry name" value="TrmE_N"/>
    <property type="match status" value="1"/>
</dbReference>
<dbReference type="Gene3D" id="3.40.50.300">
    <property type="entry name" value="P-loop containing nucleotide triphosphate hydrolases"/>
    <property type="match status" value="1"/>
</dbReference>
<dbReference type="Gene3D" id="3.30.1360.120">
    <property type="entry name" value="Probable tRNA modification gtpase trme, domain 1"/>
    <property type="match status" value="1"/>
</dbReference>
<dbReference type="Gene3D" id="1.20.120.430">
    <property type="entry name" value="tRNA modification GTPase MnmE domain 2"/>
    <property type="match status" value="1"/>
</dbReference>
<dbReference type="HAMAP" id="MF_00379">
    <property type="entry name" value="GTPase_MnmE"/>
    <property type="match status" value="1"/>
</dbReference>
<dbReference type="InterPro" id="IPR031168">
    <property type="entry name" value="G_TrmE"/>
</dbReference>
<dbReference type="InterPro" id="IPR006073">
    <property type="entry name" value="GTP-bd"/>
</dbReference>
<dbReference type="InterPro" id="IPR018948">
    <property type="entry name" value="GTP-bd_TrmE_N"/>
</dbReference>
<dbReference type="InterPro" id="IPR004520">
    <property type="entry name" value="GTPase_MnmE"/>
</dbReference>
<dbReference type="InterPro" id="IPR027368">
    <property type="entry name" value="MnmE_dom2"/>
</dbReference>
<dbReference type="InterPro" id="IPR025867">
    <property type="entry name" value="MnmE_helical"/>
</dbReference>
<dbReference type="InterPro" id="IPR027417">
    <property type="entry name" value="P-loop_NTPase"/>
</dbReference>
<dbReference type="InterPro" id="IPR005225">
    <property type="entry name" value="Small_GTP-bd"/>
</dbReference>
<dbReference type="InterPro" id="IPR027266">
    <property type="entry name" value="TrmE/GcvT_dom1"/>
</dbReference>
<dbReference type="NCBIfam" id="TIGR00450">
    <property type="entry name" value="mnmE_trmE_thdF"/>
    <property type="match status" value="1"/>
</dbReference>
<dbReference type="NCBIfam" id="NF003661">
    <property type="entry name" value="PRK05291.1-3"/>
    <property type="match status" value="1"/>
</dbReference>
<dbReference type="NCBIfam" id="TIGR00231">
    <property type="entry name" value="small_GTP"/>
    <property type="match status" value="1"/>
</dbReference>
<dbReference type="PANTHER" id="PTHR42714">
    <property type="entry name" value="TRNA MODIFICATION GTPASE GTPBP3"/>
    <property type="match status" value="1"/>
</dbReference>
<dbReference type="PANTHER" id="PTHR42714:SF2">
    <property type="entry name" value="TRNA MODIFICATION GTPASE GTPBP3, MITOCHONDRIAL"/>
    <property type="match status" value="1"/>
</dbReference>
<dbReference type="Pfam" id="PF01926">
    <property type="entry name" value="MMR_HSR1"/>
    <property type="match status" value="1"/>
</dbReference>
<dbReference type="Pfam" id="PF12631">
    <property type="entry name" value="MnmE_helical"/>
    <property type="match status" value="1"/>
</dbReference>
<dbReference type="Pfam" id="PF10396">
    <property type="entry name" value="TrmE_N"/>
    <property type="match status" value="1"/>
</dbReference>
<dbReference type="PRINTS" id="PR00326">
    <property type="entry name" value="GTP1OBG"/>
</dbReference>
<dbReference type="SUPFAM" id="SSF52540">
    <property type="entry name" value="P-loop containing nucleoside triphosphate hydrolases"/>
    <property type="match status" value="1"/>
</dbReference>
<dbReference type="SUPFAM" id="SSF116878">
    <property type="entry name" value="TrmE connector domain"/>
    <property type="match status" value="1"/>
</dbReference>
<dbReference type="PROSITE" id="PS51709">
    <property type="entry name" value="G_TRME"/>
    <property type="match status" value="1"/>
</dbReference>
<feature type="chain" id="PRO_0000345735" description="tRNA modification GTPase MnmE">
    <location>
        <begin position="1"/>
        <end position="464"/>
    </location>
</feature>
<feature type="domain" description="TrmE-type G">
    <location>
        <begin position="226"/>
        <end position="386"/>
    </location>
</feature>
<feature type="binding site" evidence="1">
    <location>
        <position position="25"/>
    </location>
    <ligand>
        <name>(6S)-5-formyl-5,6,7,8-tetrahydrofolate</name>
        <dbReference type="ChEBI" id="CHEBI:57457"/>
    </ligand>
</feature>
<feature type="binding site" evidence="1">
    <location>
        <position position="87"/>
    </location>
    <ligand>
        <name>(6S)-5-formyl-5,6,7,8-tetrahydrofolate</name>
        <dbReference type="ChEBI" id="CHEBI:57457"/>
    </ligand>
</feature>
<feature type="binding site" evidence="1">
    <location>
        <position position="130"/>
    </location>
    <ligand>
        <name>(6S)-5-formyl-5,6,7,8-tetrahydrofolate</name>
        <dbReference type="ChEBI" id="CHEBI:57457"/>
    </ligand>
</feature>
<feature type="binding site" evidence="1">
    <location>
        <begin position="236"/>
        <end position="241"/>
    </location>
    <ligand>
        <name>GTP</name>
        <dbReference type="ChEBI" id="CHEBI:37565"/>
    </ligand>
</feature>
<feature type="binding site" evidence="1">
    <location>
        <position position="236"/>
    </location>
    <ligand>
        <name>K(+)</name>
        <dbReference type="ChEBI" id="CHEBI:29103"/>
    </ligand>
</feature>
<feature type="binding site" evidence="1">
    <location>
        <position position="240"/>
    </location>
    <ligand>
        <name>Mg(2+)</name>
        <dbReference type="ChEBI" id="CHEBI:18420"/>
    </ligand>
</feature>
<feature type="binding site" evidence="1">
    <location>
        <begin position="255"/>
        <end position="261"/>
    </location>
    <ligand>
        <name>GTP</name>
        <dbReference type="ChEBI" id="CHEBI:37565"/>
    </ligand>
</feature>
<feature type="binding site" evidence="1">
    <location>
        <position position="255"/>
    </location>
    <ligand>
        <name>K(+)</name>
        <dbReference type="ChEBI" id="CHEBI:29103"/>
    </ligand>
</feature>
<feature type="binding site" evidence="1">
    <location>
        <position position="257"/>
    </location>
    <ligand>
        <name>K(+)</name>
        <dbReference type="ChEBI" id="CHEBI:29103"/>
    </ligand>
</feature>
<feature type="binding site" evidence="1">
    <location>
        <position position="260"/>
    </location>
    <ligand>
        <name>K(+)</name>
        <dbReference type="ChEBI" id="CHEBI:29103"/>
    </ligand>
</feature>
<feature type="binding site" evidence="1">
    <location>
        <position position="261"/>
    </location>
    <ligand>
        <name>Mg(2+)</name>
        <dbReference type="ChEBI" id="CHEBI:18420"/>
    </ligand>
</feature>
<feature type="binding site" evidence="1">
    <location>
        <begin position="280"/>
        <end position="283"/>
    </location>
    <ligand>
        <name>GTP</name>
        <dbReference type="ChEBI" id="CHEBI:37565"/>
    </ligand>
</feature>
<feature type="binding site" evidence="1">
    <location>
        <position position="464"/>
    </location>
    <ligand>
        <name>(6S)-5-formyl-5,6,7,8-tetrahydrofolate</name>
        <dbReference type="ChEBI" id="CHEBI:57457"/>
    </ligand>
</feature>
<organism>
    <name type="scientific">Burkholderia ambifaria (strain ATCC BAA-244 / DSM 16087 / CCUG 44356 / LMG 19182 / AMMD)</name>
    <name type="common">Burkholderia cepacia (strain AMMD)</name>
    <dbReference type="NCBI Taxonomy" id="339670"/>
    <lineage>
        <taxon>Bacteria</taxon>
        <taxon>Pseudomonadati</taxon>
        <taxon>Pseudomonadota</taxon>
        <taxon>Betaproteobacteria</taxon>
        <taxon>Burkholderiales</taxon>
        <taxon>Burkholderiaceae</taxon>
        <taxon>Burkholderia</taxon>
        <taxon>Burkholderia cepacia complex</taxon>
    </lineage>
</organism>
<protein>
    <recommendedName>
        <fullName evidence="1">tRNA modification GTPase MnmE</fullName>
        <ecNumber evidence="1">3.6.-.-</ecNumber>
    </recommendedName>
</protein>
<proteinExistence type="inferred from homology"/>
<accession>Q0BAQ4</accession>
<comment type="function">
    <text evidence="1">Exhibits a very high intrinsic GTPase hydrolysis rate. Involved in the addition of a carboxymethylaminomethyl (cmnm) group at the wobble position (U34) of certain tRNAs, forming tRNA-cmnm(5)s(2)U34.</text>
</comment>
<comment type="cofactor">
    <cofactor evidence="1">
        <name>K(+)</name>
        <dbReference type="ChEBI" id="CHEBI:29103"/>
    </cofactor>
    <text evidence="1">Binds 1 potassium ion per subunit.</text>
</comment>
<comment type="subunit">
    <text evidence="1">Homodimer. Heterotetramer of two MnmE and two MnmG subunits.</text>
</comment>
<comment type="subcellular location">
    <subcellularLocation>
        <location evidence="1">Cytoplasm</location>
    </subcellularLocation>
</comment>
<comment type="similarity">
    <text evidence="1">Belongs to the TRAFAC class TrmE-Era-EngA-EngB-Septin-like GTPase superfamily. TrmE GTPase family.</text>
</comment>
<comment type="sequence caution" evidence="2">
    <conflict type="erroneous initiation">
        <sequence resource="EMBL-CDS" id="ABI88769"/>
    </conflict>
</comment>